<accession>B8J1Q4</accession>
<feature type="chain" id="PRO_1000135550" description="Putative nickel-responsive regulator">
    <location>
        <begin position="1"/>
        <end position="138"/>
    </location>
</feature>
<feature type="binding site" evidence="1">
    <location>
        <position position="78"/>
    </location>
    <ligand>
        <name>Ni(2+)</name>
        <dbReference type="ChEBI" id="CHEBI:49786"/>
    </ligand>
</feature>
<feature type="binding site" evidence="1">
    <location>
        <position position="89"/>
    </location>
    <ligand>
        <name>Ni(2+)</name>
        <dbReference type="ChEBI" id="CHEBI:49786"/>
    </ligand>
</feature>
<feature type="binding site" evidence="1">
    <location>
        <position position="91"/>
    </location>
    <ligand>
        <name>Ni(2+)</name>
        <dbReference type="ChEBI" id="CHEBI:49786"/>
    </ligand>
</feature>
<feature type="binding site" evidence="1">
    <location>
        <position position="97"/>
    </location>
    <ligand>
        <name>Ni(2+)</name>
        <dbReference type="ChEBI" id="CHEBI:49786"/>
    </ligand>
</feature>
<proteinExistence type="inferred from homology"/>
<reference key="1">
    <citation type="submission" date="2009-01" db="EMBL/GenBank/DDBJ databases">
        <title>Complete sequence of Desulfovibrio desulfuricans subsp. desulfuricans str. ATCC 27774.</title>
        <authorList>
            <consortium name="US DOE Joint Genome Institute"/>
            <person name="Lucas S."/>
            <person name="Copeland A."/>
            <person name="Lapidus A."/>
            <person name="Glavina del Rio T."/>
            <person name="Tice H."/>
            <person name="Bruce D."/>
            <person name="Goodwin L."/>
            <person name="Pitluck S."/>
            <person name="Sims D."/>
            <person name="Lu M."/>
            <person name="Kiss H."/>
            <person name="Meineke L."/>
            <person name="Brettin T."/>
            <person name="Detter J.C."/>
            <person name="Han C."/>
            <person name="Larimer F."/>
            <person name="Land M."/>
            <person name="Hauser L."/>
            <person name="Kyrpides N."/>
            <person name="Ovchinnikova G."/>
            <person name="Hazen T.C."/>
        </authorList>
    </citation>
    <scope>NUCLEOTIDE SEQUENCE [LARGE SCALE GENOMIC DNA]</scope>
    <source>
        <strain>ATCC 27774 / DSM 6949 / MB</strain>
    </source>
</reference>
<evidence type="ECO:0000255" key="1">
    <source>
        <dbReference type="HAMAP-Rule" id="MF_00476"/>
    </source>
</evidence>
<keyword id="KW-0238">DNA-binding</keyword>
<keyword id="KW-0479">Metal-binding</keyword>
<keyword id="KW-0533">Nickel</keyword>
<keyword id="KW-0804">Transcription</keyword>
<keyword id="KW-0805">Transcription regulation</keyword>
<dbReference type="EMBL" id="CP001358">
    <property type="protein sequence ID" value="ACL49662.1"/>
    <property type="molecule type" value="Genomic_DNA"/>
</dbReference>
<dbReference type="SMR" id="B8J1Q4"/>
<dbReference type="STRING" id="525146.Ddes_1765"/>
<dbReference type="KEGG" id="dds:Ddes_1765"/>
<dbReference type="eggNOG" id="COG0864">
    <property type="taxonomic scope" value="Bacteria"/>
</dbReference>
<dbReference type="HOGENOM" id="CLU_113319_1_2_7"/>
<dbReference type="GO" id="GO:0003677">
    <property type="term" value="F:DNA binding"/>
    <property type="evidence" value="ECO:0007669"/>
    <property type="project" value="UniProtKB-KW"/>
</dbReference>
<dbReference type="GO" id="GO:0003700">
    <property type="term" value="F:DNA-binding transcription factor activity"/>
    <property type="evidence" value="ECO:0007669"/>
    <property type="project" value="UniProtKB-UniRule"/>
</dbReference>
<dbReference type="GO" id="GO:0016151">
    <property type="term" value="F:nickel cation binding"/>
    <property type="evidence" value="ECO:0007669"/>
    <property type="project" value="UniProtKB-UniRule"/>
</dbReference>
<dbReference type="GO" id="GO:0010045">
    <property type="term" value="P:response to nickel cation"/>
    <property type="evidence" value="ECO:0007669"/>
    <property type="project" value="InterPro"/>
</dbReference>
<dbReference type="CDD" id="cd22231">
    <property type="entry name" value="RHH_NikR_HicB-like"/>
    <property type="match status" value="1"/>
</dbReference>
<dbReference type="Gene3D" id="3.30.70.1150">
    <property type="entry name" value="ACT-like. Chain A, domain 2"/>
    <property type="match status" value="1"/>
</dbReference>
<dbReference type="Gene3D" id="1.10.1220.10">
    <property type="entry name" value="Met repressor-like"/>
    <property type="match status" value="1"/>
</dbReference>
<dbReference type="HAMAP" id="MF_00476">
    <property type="entry name" value="NikR"/>
    <property type="match status" value="1"/>
</dbReference>
<dbReference type="InterPro" id="IPR027271">
    <property type="entry name" value="Acetolactate_synth/TF_NikR_C"/>
</dbReference>
<dbReference type="InterPro" id="IPR045865">
    <property type="entry name" value="ACT-like_dom_sf"/>
</dbReference>
<dbReference type="InterPro" id="IPR013321">
    <property type="entry name" value="Arc_rbn_hlx_hlx"/>
</dbReference>
<dbReference type="InterPro" id="IPR002145">
    <property type="entry name" value="CopG"/>
</dbReference>
<dbReference type="InterPro" id="IPR050192">
    <property type="entry name" value="CopG/NikR_regulator"/>
</dbReference>
<dbReference type="InterPro" id="IPR022988">
    <property type="entry name" value="Ni_resp_reg_NikR"/>
</dbReference>
<dbReference type="InterPro" id="IPR010985">
    <property type="entry name" value="Ribbon_hlx_hlx"/>
</dbReference>
<dbReference type="InterPro" id="IPR014864">
    <property type="entry name" value="TF_NikR_Ni-bd_C"/>
</dbReference>
<dbReference type="NCBIfam" id="NF001884">
    <property type="entry name" value="PRK00630.1"/>
    <property type="match status" value="1"/>
</dbReference>
<dbReference type="NCBIfam" id="NF002169">
    <property type="entry name" value="PRK01002.1"/>
    <property type="match status" value="1"/>
</dbReference>
<dbReference type="NCBIfam" id="NF002815">
    <property type="entry name" value="PRK02967.1"/>
    <property type="match status" value="1"/>
</dbReference>
<dbReference type="NCBIfam" id="NF003381">
    <property type="entry name" value="PRK04460.1"/>
    <property type="match status" value="1"/>
</dbReference>
<dbReference type="PANTHER" id="PTHR34719">
    <property type="entry name" value="NICKEL-RESPONSIVE REGULATOR"/>
    <property type="match status" value="1"/>
</dbReference>
<dbReference type="PANTHER" id="PTHR34719:SF2">
    <property type="entry name" value="NICKEL-RESPONSIVE REGULATOR"/>
    <property type="match status" value="1"/>
</dbReference>
<dbReference type="Pfam" id="PF08753">
    <property type="entry name" value="NikR_C"/>
    <property type="match status" value="1"/>
</dbReference>
<dbReference type="Pfam" id="PF01402">
    <property type="entry name" value="RHH_1"/>
    <property type="match status" value="1"/>
</dbReference>
<dbReference type="SUPFAM" id="SSF55021">
    <property type="entry name" value="ACT-like"/>
    <property type="match status" value="1"/>
</dbReference>
<dbReference type="SUPFAM" id="SSF47598">
    <property type="entry name" value="Ribbon-helix-helix"/>
    <property type="match status" value="1"/>
</dbReference>
<comment type="function">
    <text evidence="1">Transcriptional regulator.</text>
</comment>
<comment type="cofactor">
    <cofactor evidence="1">
        <name>Ni(2+)</name>
        <dbReference type="ChEBI" id="CHEBI:49786"/>
    </cofactor>
    <text evidence="1">Binds 1 nickel ion per subunit.</text>
</comment>
<comment type="similarity">
    <text evidence="1">Belongs to the transcriptional regulatory CopG/NikR family.</text>
</comment>
<protein>
    <recommendedName>
        <fullName evidence="1">Putative nickel-responsive regulator</fullName>
    </recommendedName>
</protein>
<organism>
    <name type="scientific">Desulfovibrio desulfuricans (strain ATCC 27774 / DSM 6949 / MB)</name>
    <dbReference type="NCBI Taxonomy" id="525146"/>
    <lineage>
        <taxon>Bacteria</taxon>
        <taxon>Pseudomonadati</taxon>
        <taxon>Thermodesulfobacteriota</taxon>
        <taxon>Desulfovibrionia</taxon>
        <taxon>Desulfovibrionales</taxon>
        <taxon>Desulfovibrionaceae</taxon>
        <taxon>Desulfovibrio</taxon>
    </lineage>
</organism>
<gene>
    <name type="ordered locus">Ddes_1765</name>
</gene>
<sequence length="138" mass="15680">MGNLARFGVSLDQDLLEPFDELCRRKSYPNRSEAIRDLIRKALVEEKWNSDAHGAGTLTLVYDHHKNDLSRRLVQIQHDDHDLIVTTLHVHLDHYNCLEVLVLKGEPKRMRALADKLIACRGVKHGTFTGTTTGEDLA</sequence>
<name>NIKR_DESDA</name>